<reference key="1">
    <citation type="journal article" date="2002" name="DNA Res.">
        <title>Complete genome structure of the thermophilic cyanobacterium Thermosynechococcus elongatus BP-1.</title>
        <authorList>
            <person name="Nakamura Y."/>
            <person name="Kaneko T."/>
            <person name="Sato S."/>
            <person name="Ikeuchi M."/>
            <person name="Katoh H."/>
            <person name="Sasamoto S."/>
            <person name="Watanabe A."/>
            <person name="Iriguchi M."/>
            <person name="Kawashima K."/>
            <person name="Kimura T."/>
            <person name="Kishida Y."/>
            <person name="Kiyokawa C."/>
            <person name="Kohara M."/>
            <person name="Matsumoto M."/>
            <person name="Matsuno A."/>
            <person name="Nakazaki N."/>
            <person name="Shimpo S."/>
            <person name="Sugimoto M."/>
            <person name="Takeuchi C."/>
            <person name="Yamada M."/>
            <person name="Tabata S."/>
        </authorList>
    </citation>
    <scope>NUCLEOTIDE SEQUENCE [LARGE SCALE GENOMIC DNA]</scope>
    <source>
        <strain>NIES-2133 / IAM M-273 / BP-1</strain>
    </source>
</reference>
<evidence type="ECO:0000255" key="1">
    <source>
        <dbReference type="HAMAP-Rule" id="MF_01024"/>
    </source>
</evidence>
<accession>Q8DGR2</accession>
<proteinExistence type="inferred from homology"/>
<name>HISX_THEVB</name>
<organism>
    <name type="scientific">Thermosynechococcus vestitus (strain NIES-2133 / IAM M-273 / BP-1)</name>
    <dbReference type="NCBI Taxonomy" id="197221"/>
    <lineage>
        <taxon>Bacteria</taxon>
        <taxon>Bacillati</taxon>
        <taxon>Cyanobacteriota</taxon>
        <taxon>Cyanophyceae</taxon>
        <taxon>Acaryochloridales</taxon>
        <taxon>Thermosynechococcaceae</taxon>
        <taxon>Thermosynechococcus</taxon>
    </lineage>
</organism>
<comment type="function">
    <text evidence="1">Catalyzes the sequential NAD-dependent oxidations of L-histidinol to L-histidinaldehyde and then to L-histidine.</text>
</comment>
<comment type="catalytic activity">
    <reaction evidence="1">
        <text>L-histidinol + 2 NAD(+) + H2O = L-histidine + 2 NADH + 3 H(+)</text>
        <dbReference type="Rhea" id="RHEA:20641"/>
        <dbReference type="ChEBI" id="CHEBI:15377"/>
        <dbReference type="ChEBI" id="CHEBI:15378"/>
        <dbReference type="ChEBI" id="CHEBI:57540"/>
        <dbReference type="ChEBI" id="CHEBI:57595"/>
        <dbReference type="ChEBI" id="CHEBI:57699"/>
        <dbReference type="ChEBI" id="CHEBI:57945"/>
        <dbReference type="EC" id="1.1.1.23"/>
    </reaction>
</comment>
<comment type="cofactor">
    <cofactor evidence="1">
        <name>Zn(2+)</name>
        <dbReference type="ChEBI" id="CHEBI:29105"/>
    </cofactor>
    <text evidence="1">Binds 1 zinc ion per subunit.</text>
</comment>
<comment type="pathway">
    <text evidence="1">Amino-acid biosynthesis; L-histidine biosynthesis; L-histidine from 5-phospho-alpha-D-ribose 1-diphosphate: step 9/9.</text>
</comment>
<comment type="similarity">
    <text evidence="1">Belongs to the histidinol dehydrogenase family.</text>
</comment>
<gene>
    <name evidence="1" type="primary">hisD</name>
    <name type="ordered locus">tll2252</name>
</gene>
<protein>
    <recommendedName>
        <fullName evidence="1">Histidinol dehydrogenase</fullName>
        <shortName evidence="1">HDH</shortName>
        <ecNumber evidence="1">1.1.1.23</ecNumber>
    </recommendedName>
</protein>
<dbReference type="EC" id="1.1.1.23" evidence="1"/>
<dbReference type="EMBL" id="BA000039">
    <property type="protein sequence ID" value="BAC09804.1"/>
    <property type="molecule type" value="Genomic_DNA"/>
</dbReference>
<dbReference type="RefSeq" id="NP_683042.1">
    <property type="nucleotide sequence ID" value="NC_004113.1"/>
</dbReference>
<dbReference type="RefSeq" id="WP_011058085.1">
    <property type="nucleotide sequence ID" value="NC_004113.1"/>
</dbReference>
<dbReference type="SMR" id="Q8DGR2"/>
<dbReference type="STRING" id="197221.gene:10748868"/>
<dbReference type="EnsemblBacteria" id="BAC09804">
    <property type="protein sequence ID" value="BAC09804"/>
    <property type="gene ID" value="BAC09804"/>
</dbReference>
<dbReference type="KEGG" id="tel:tll2252"/>
<dbReference type="PATRIC" id="fig|197221.4.peg.2360"/>
<dbReference type="eggNOG" id="COG0141">
    <property type="taxonomic scope" value="Bacteria"/>
</dbReference>
<dbReference type="UniPathway" id="UPA00031">
    <property type="reaction ID" value="UER00014"/>
</dbReference>
<dbReference type="Proteomes" id="UP000000440">
    <property type="component" value="Chromosome"/>
</dbReference>
<dbReference type="GO" id="GO:0005829">
    <property type="term" value="C:cytosol"/>
    <property type="evidence" value="ECO:0007669"/>
    <property type="project" value="TreeGrafter"/>
</dbReference>
<dbReference type="GO" id="GO:0004399">
    <property type="term" value="F:histidinol dehydrogenase activity"/>
    <property type="evidence" value="ECO:0007669"/>
    <property type="project" value="UniProtKB-UniRule"/>
</dbReference>
<dbReference type="GO" id="GO:0051287">
    <property type="term" value="F:NAD binding"/>
    <property type="evidence" value="ECO:0007669"/>
    <property type="project" value="InterPro"/>
</dbReference>
<dbReference type="GO" id="GO:0008270">
    <property type="term" value="F:zinc ion binding"/>
    <property type="evidence" value="ECO:0007669"/>
    <property type="project" value="UniProtKB-UniRule"/>
</dbReference>
<dbReference type="GO" id="GO:0000105">
    <property type="term" value="P:L-histidine biosynthetic process"/>
    <property type="evidence" value="ECO:0007669"/>
    <property type="project" value="UniProtKB-UniRule"/>
</dbReference>
<dbReference type="CDD" id="cd06572">
    <property type="entry name" value="Histidinol_dh"/>
    <property type="match status" value="1"/>
</dbReference>
<dbReference type="FunFam" id="3.40.50.1980:FF:000001">
    <property type="entry name" value="Histidinol dehydrogenase"/>
    <property type="match status" value="1"/>
</dbReference>
<dbReference type="FunFam" id="3.40.50.1980:FF:000026">
    <property type="entry name" value="Histidinol dehydrogenase"/>
    <property type="match status" value="1"/>
</dbReference>
<dbReference type="Gene3D" id="1.20.5.1300">
    <property type="match status" value="1"/>
</dbReference>
<dbReference type="Gene3D" id="3.40.50.1980">
    <property type="entry name" value="Nitrogenase molybdenum iron protein domain"/>
    <property type="match status" value="2"/>
</dbReference>
<dbReference type="HAMAP" id="MF_01024">
    <property type="entry name" value="HisD"/>
    <property type="match status" value="1"/>
</dbReference>
<dbReference type="InterPro" id="IPR016161">
    <property type="entry name" value="Ald_DH/histidinol_DH"/>
</dbReference>
<dbReference type="InterPro" id="IPR001692">
    <property type="entry name" value="Histidinol_DH_CS"/>
</dbReference>
<dbReference type="InterPro" id="IPR022695">
    <property type="entry name" value="Histidinol_DH_monofunct"/>
</dbReference>
<dbReference type="InterPro" id="IPR012131">
    <property type="entry name" value="Hstdl_DH"/>
</dbReference>
<dbReference type="NCBIfam" id="TIGR00069">
    <property type="entry name" value="hisD"/>
    <property type="match status" value="1"/>
</dbReference>
<dbReference type="PANTHER" id="PTHR21256:SF2">
    <property type="entry name" value="HISTIDINE BIOSYNTHESIS TRIFUNCTIONAL PROTEIN"/>
    <property type="match status" value="1"/>
</dbReference>
<dbReference type="PANTHER" id="PTHR21256">
    <property type="entry name" value="HISTIDINOL DEHYDROGENASE HDH"/>
    <property type="match status" value="1"/>
</dbReference>
<dbReference type="Pfam" id="PF00815">
    <property type="entry name" value="Histidinol_dh"/>
    <property type="match status" value="1"/>
</dbReference>
<dbReference type="PIRSF" id="PIRSF000099">
    <property type="entry name" value="Histidinol_dh"/>
    <property type="match status" value="1"/>
</dbReference>
<dbReference type="PRINTS" id="PR00083">
    <property type="entry name" value="HOLDHDRGNASE"/>
</dbReference>
<dbReference type="SUPFAM" id="SSF53720">
    <property type="entry name" value="ALDH-like"/>
    <property type="match status" value="1"/>
</dbReference>
<dbReference type="PROSITE" id="PS00611">
    <property type="entry name" value="HISOL_DEHYDROGENASE"/>
    <property type="match status" value="1"/>
</dbReference>
<feature type="chain" id="PRO_0000135862" description="Histidinol dehydrogenase">
    <location>
        <begin position="1"/>
        <end position="431"/>
    </location>
</feature>
<feature type="active site" description="Proton acceptor" evidence="1">
    <location>
        <position position="328"/>
    </location>
</feature>
<feature type="active site" description="Proton acceptor" evidence="1">
    <location>
        <position position="329"/>
    </location>
</feature>
<feature type="binding site" evidence="1">
    <location>
        <position position="130"/>
    </location>
    <ligand>
        <name>NAD(+)</name>
        <dbReference type="ChEBI" id="CHEBI:57540"/>
    </ligand>
</feature>
<feature type="binding site" evidence="1">
    <location>
        <position position="192"/>
    </location>
    <ligand>
        <name>NAD(+)</name>
        <dbReference type="ChEBI" id="CHEBI:57540"/>
    </ligand>
</feature>
<feature type="binding site" evidence="1">
    <location>
        <position position="215"/>
    </location>
    <ligand>
        <name>NAD(+)</name>
        <dbReference type="ChEBI" id="CHEBI:57540"/>
    </ligand>
</feature>
<feature type="binding site" evidence="1">
    <location>
        <position position="238"/>
    </location>
    <ligand>
        <name>substrate</name>
    </ligand>
</feature>
<feature type="binding site" evidence="1">
    <location>
        <position position="260"/>
    </location>
    <ligand>
        <name>substrate</name>
    </ligand>
</feature>
<feature type="binding site" evidence="1">
    <location>
        <position position="260"/>
    </location>
    <ligand>
        <name>Zn(2+)</name>
        <dbReference type="ChEBI" id="CHEBI:29105"/>
    </ligand>
</feature>
<feature type="binding site" evidence="1">
    <location>
        <position position="263"/>
    </location>
    <ligand>
        <name>substrate</name>
    </ligand>
</feature>
<feature type="binding site" evidence="1">
    <location>
        <position position="263"/>
    </location>
    <ligand>
        <name>Zn(2+)</name>
        <dbReference type="ChEBI" id="CHEBI:29105"/>
    </ligand>
</feature>
<feature type="binding site" evidence="1">
    <location>
        <position position="329"/>
    </location>
    <ligand>
        <name>substrate</name>
    </ligand>
</feature>
<feature type="binding site" evidence="1">
    <location>
        <position position="362"/>
    </location>
    <ligand>
        <name>substrate</name>
    </ligand>
</feature>
<feature type="binding site" evidence="1">
    <location>
        <position position="362"/>
    </location>
    <ligand>
        <name>Zn(2+)</name>
        <dbReference type="ChEBI" id="CHEBI:29105"/>
    </ligand>
</feature>
<feature type="binding site" evidence="1">
    <location>
        <position position="416"/>
    </location>
    <ligand>
        <name>substrate</name>
    </ligand>
</feature>
<feature type="binding site" evidence="1">
    <location>
        <position position="421"/>
    </location>
    <ligand>
        <name>substrate</name>
    </ligand>
</feature>
<feature type="binding site" evidence="1">
    <location>
        <position position="421"/>
    </location>
    <ligand>
        <name>Zn(2+)</name>
        <dbReference type="ChEBI" id="CHEBI:29105"/>
    </ligand>
</feature>
<sequence length="431" mass="46340">MLRIITQLTDLRAELRRICDRTDSGEMSEQQATVEAILRRVAKDGDRALIEYTAQFDHIDLTPETLRVKGDELDAAYQQVSKELLDAIRLAKQQIEAFHRQRVPKSWVQFGEDGVVLGKRYTAVDAAGLYVPGGRAAYPSTVLMNAIPAQVAGVQRIVMVTPPGQGKGINPAVLVAAQEAGIQEIYRVGGAQAIAALAYGTETIPRVDVITGPGNLYVMLAKKQVYGRVGIDSLAGPSEVLIIADEAAHPAQIAADLLAQAEHDPLAAAILLTPSLSLAKAVVTAVNEQLADHPRRVLTEKAIAHYGLIGIVETLEQAVELSNSFAPEHLELEVEDPWSLVEQVRHAGAIFLGYSTPEAVGDYLAGPNHTLPTSGAARYASALGVETFLKHSSIIQYTPAALRKQGGAVMTLAETEGLISHRDSVRLRLQP</sequence>
<keyword id="KW-0028">Amino-acid biosynthesis</keyword>
<keyword id="KW-0368">Histidine biosynthesis</keyword>
<keyword id="KW-0479">Metal-binding</keyword>
<keyword id="KW-0520">NAD</keyword>
<keyword id="KW-0560">Oxidoreductase</keyword>
<keyword id="KW-1185">Reference proteome</keyword>
<keyword id="KW-0862">Zinc</keyword>